<gene>
    <name evidence="1" type="primary">rnhB</name>
    <name type="ordered locus">NGR_c04520</name>
</gene>
<sequence length="231" mass="24428">MSRRKSPDSPLFQLEPVLPDFSFEITAKRDGFWPVAGADEAGRGPLAGPVVAAAVILDPDAVPGGLNDSKLLTAEQREALFTEIMATATVSIASSSAAHIDATDILKASLDAMRRAIDGLSIAARFALIDGRDVPQGLPCHAKAIVKGDSRSVSIAAASIVAKVTRDRMMARADATFPAYGFALHAGYATVRHRSAIDSHGPCSLHRMSFRPFREAQEQPLAVSTGPIDPN</sequence>
<dbReference type="EC" id="3.1.26.4" evidence="1"/>
<dbReference type="EMBL" id="CP001389">
    <property type="protein sequence ID" value="ACP24248.1"/>
    <property type="molecule type" value="Genomic_DNA"/>
</dbReference>
<dbReference type="RefSeq" id="WP_012707033.1">
    <property type="nucleotide sequence ID" value="NC_012587.1"/>
</dbReference>
<dbReference type="RefSeq" id="YP_002825001.1">
    <property type="nucleotide sequence ID" value="NC_012587.1"/>
</dbReference>
<dbReference type="SMR" id="C3MHC0"/>
<dbReference type="STRING" id="394.NGR_c04520"/>
<dbReference type="KEGG" id="rhi:NGR_c04520"/>
<dbReference type="PATRIC" id="fig|394.7.peg.3259"/>
<dbReference type="eggNOG" id="COG0164">
    <property type="taxonomic scope" value="Bacteria"/>
</dbReference>
<dbReference type="HOGENOM" id="CLU_036532_3_2_5"/>
<dbReference type="OrthoDB" id="9803420at2"/>
<dbReference type="Proteomes" id="UP000001054">
    <property type="component" value="Chromosome"/>
</dbReference>
<dbReference type="GO" id="GO:0005737">
    <property type="term" value="C:cytoplasm"/>
    <property type="evidence" value="ECO:0007669"/>
    <property type="project" value="UniProtKB-SubCell"/>
</dbReference>
<dbReference type="GO" id="GO:0032299">
    <property type="term" value="C:ribonuclease H2 complex"/>
    <property type="evidence" value="ECO:0007669"/>
    <property type="project" value="TreeGrafter"/>
</dbReference>
<dbReference type="GO" id="GO:0030145">
    <property type="term" value="F:manganese ion binding"/>
    <property type="evidence" value="ECO:0007669"/>
    <property type="project" value="UniProtKB-UniRule"/>
</dbReference>
<dbReference type="GO" id="GO:0003723">
    <property type="term" value="F:RNA binding"/>
    <property type="evidence" value="ECO:0007669"/>
    <property type="project" value="InterPro"/>
</dbReference>
<dbReference type="GO" id="GO:0004523">
    <property type="term" value="F:RNA-DNA hybrid ribonuclease activity"/>
    <property type="evidence" value="ECO:0007669"/>
    <property type="project" value="UniProtKB-UniRule"/>
</dbReference>
<dbReference type="GO" id="GO:0043137">
    <property type="term" value="P:DNA replication, removal of RNA primer"/>
    <property type="evidence" value="ECO:0007669"/>
    <property type="project" value="TreeGrafter"/>
</dbReference>
<dbReference type="GO" id="GO:0006298">
    <property type="term" value="P:mismatch repair"/>
    <property type="evidence" value="ECO:0007669"/>
    <property type="project" value="TreeGrafter"/>
</dbReference>
<dbReference type="CDD" id="cd07182">
    <property type="entry name" value="RNase_HII_bacteria_HII_like"/>
    <property type="match status" value="1"/>
</dbReference>
<dbReference type="Gene3D" id="3.30.420.10">
    <property type="entry name" value="Ribonuclease H-like superfamily/Ribonuclease H"/>
    <property type="match status" value="1"/>
</dbReference>
<dbReference type="HAMAP" id="MF_00052_B">
    <property type="entry name" value="RNase_HII_B"/>
    <property type="match status" value="1"/>
</dbReference>
<dbReference type="InterPro" id="IPR022898">
    <property type="entry name" value="RNase_HII"/>
</dbReference>
<dbReference type="InterPro" id="IPR001352">
    <property type="entry name" value="RNase_HII/HIII"/>
</dbReference>
<dbReference type="InterPro" id="IPR024567">
    <property type="entry name" value="RNase_HII/HIII_dom"/>
</dbReference>
<dbReference type="InterPro" id="IPR012337">
    <property type="entry name" value="RNaseH-like_sf"/>
</dbReference>
<dbReference type="InterPro" id="IPR036397">
    <property type="entry name" value="RNaseH_sf"/>
</dbReference>
<dbReference type="NCBIfam" id="NF000595">
    <property type="entry name" value="PRK00015.1-3"/>
    <property type="match status" value="1"/>
</dbReference>
<dbReference type="PANTHER" id="PTHR10954">
    <property type="entry name" value="RIBONUCLEASE H2 SUBUNIT A"/>
    <property type="match status" value="1"/>
</dbReference>
<dbReference type="PANTHER" id="PTHR10954:SF18">
    <property type="entry name" value="RIBONUCLEASE HII"/>
    <property type="match status" value="1"/>
</dbReference>
<dbReference type="Pfam" id="PF01351">
    <property type="entry name" value="RNase_HII"/>
    <property type="match status" value="1"/>
</dbReference>
<dbReference type="SUPFAM" id="SSF53098">
    <property type="entry name" value="Ribonuclease H-like"/>
    <property type="match status" value="1"/>
</dbReference>
<dbReference type="PROSITE" id="PS51975">
    <property type="entry name" value="RNASE_H_2"/>
    <property type="match status" value="1"/>
</dbReference>
<accession>C3MHC0</accession>
<organism>
    <name type="scientific">Sinorhizobium fredii (strain NBRC 101917 / NGR234)</name>
    <dbReference type="NCBI Taxonomy" id="394"/>
    <lineage>
        <taxon>Bacteria</taxon>
        <taxon>Pseudomonadati</taxon>
        <taxon>Pseudomonadota</taxon>
        <taxon>Alphaproteobacteria</taxon>
        <taxon>Hyphomicrobiales</taxon>
        <taxon>Rhizobiaceae</taxon>
        <taxon>Sinorhizobium/Ensifer group</taxon>
        <taxon>Sinorhizobium</taxon>
    </lineage>
</organism>
<evidence type="ECO:0000255" key="1">
    <source>
        <dbReference type="HAMAP-Rule" id="MF_00052"/>
    </source>
</evidence>
<evidence type="ECO:0000255" key="2">
    <source>
        <dbReference type="PROSITE-ProRule" id="PRU01319"/>
    </source>
</evidence>
<reference key="1">
    <citation type="journal article" date="2009" name="Appl. Environ. Microbiol.">
        <title>Rhizobium sp. strain NGR234 possesses a remarkable number of secretion systems.</title>
        <authorList>
            <person name="Schmeisser C."/>
            <person name="Liesegang H."/>
            <person name="Krysciak D."/>
            <person name="Bakkou N."/>
            <person name="Le Quere A."/>
            <person name="Wollherr A."/>
            <person name="Heinemeyer I."/>
            <person name="Morgenstern B."/>
            <person name="Pommerening-Roeser A."/>
            <person name="Flores M."/>
            <person name="Palacios R."/>
            <person name="Brenner S."/>
            <person name="Gottschalk G."/>
            <person name="Schmitz R.A."/>
            <person name="Broughton W.J."/>
            <person name="Perret X."/>
            <person name="Strittmatter A.W."/>
            <person name="Streit W.R."/>
        </authorList>
    </citation>
    <scope>NUCLEOTIDE SEQUENCE [LARGE SCALE GENOMIC DNA]</scope>
    <source>
        <strain>NBRC 101917 / NGR234</strain>
    </source>
</reference>
<comment type="function">
    <text evidence="1">Endonuclease that specifically degrades the RNA of RNA-DNA hybrids.</text>
</comment>
<comment type="catalytic activity">
    <reaction evidence="1">
        <text>Endonucleolytic cleavage to 5'-phosphomonoester.</text>
        <dbReference type="EC" id="3.1.26.4"/>
    </reaction>
</comment>
<comment type="cofactor">
    <cofactor evidence="1">
        <name>Mn(2+)</name>
        <dbReference type="ChEBI" id="CHEBI:29035"/>
    </cofactor>
    <cofactor evidence="1">
        <name>Mg(2+)</name>
        <dbReference type="ChEBI" id="CHEBI:18420"/>
    </cofactor>
    <text evidence="1">Manganese or magnesium. Binds 1 divalent metal ion per monomer in the absence of substrate. May bind a second metal ion after substrate binding.</text>
</comment>
<comment type="subcellular location">
    <subcellularLocation>
        <location evidence="1">Cytoplasm</location>
    </subcellularLocation>
</comment>
<comment type="similarity">
    <text evidence="1">Belongs to the RNase HII family.</text>
</comment>
<protein>
    <recommendedName>
        <fullName evidence="1">Ribonuclease HII</fullName>
        <shortName evidence="1">RNase HII</shortName>
        <ecNumber evidence="1">3.1.26.4</ecNumber>
    </recommendedName>
</protein>
<feature type="chain" id="PRO_1000117680" description="Ribonuclease HII">
    <location>
        <begin position="1"/>
        <end position="231"/>
    </location>
</feature>
<feature type="domain" description="RNase H type-2" evidence="2">
    <location>
        <begin position="33"/>
        <end position="222"/>
    </location>
</feature>
<feature type="binding site" evidence="1">
    <location>
        <position position="39"/>
    </location>
    <ligand>
        <name>a divalent metal cation</name>
        <dbReference type="ChEBI" id="CHEBI:60240"/>
    </ligand>
</feature>
<feature type="binding site" evidence="1">
    <location>
        <position position="40"/>
    </location>
    <ligand>
        <name>a divalent metal cation</name>
        <dbReference type="ChEBI" id="CHEBI:60240"/>
    </ligand>
</feature>
<feature type="binding site" evidence="1">
    <location>
        <position position="130"/>
    </location>
    <ligand>
        <name>a divalent metal cation</name>
        <dbReference type="ChEBI" id="CHEBI:60240"/>
    </ligand>
</feature>
<proteinExistence type="inferred from homology"/>
<keyword id="KW-0963">Cytoplasm</keyword>
<keyword id="KW-0255">Endonuclease</keyword>
<keyword id="KW-0378">Hydrolase</keyword>
<keyword id="KW-0464">Manganese</keyword>
<keyword id="KW-0479">Metal-binding</keyword>
<keyword id="KW-0540">Nuclease</keyword>
<keyword id="KW-1185">Reference proteome</keyword>
<name>RNH2_SINFN</name>